<name>VEMP_BCHK9</name>
<comment type="function">
    <text evidence="1">Plays a central role in virus morphogenesis and assembly. Acts as a viroporin and self-assembles in host membranes forming pentameric protein-lipid pores that allow ion transport. Also plays a role in the induction of apoptosis.</text>
</comment>
<comment type="subunit">
    <text evidence="1">Homopentamer. Interacts with membrane protein M in the budding compartment of the host cell, which is located between endoplasmic reticulum and the Golgi complex. Interacts with Nucleoprotein.</text>
</comment>
<comment type="subcellular location">
    <subcellularLocation>
        <location evidence="1">Host Golgi apparatus membrane</location>
        <topology evidence="1">Single-pass type III membrane protein</topology>
    </subcellularLocation>
    <text evidence="1">The cytoplasmic tail functions as a Golgi complex-targeting signal.</text>
</comment>
<comment type="similarity">
    <text evidence="1">Belongs to the betacoronaviruses E protein family.</text>
</comment>
<evidence type="ECO:0000255" key="1">
    <source>
        <dbReference type="HAMAP-Rule" id="MF_04204"/>
    </source>
</evidence>
<organismHost>
    <name type="scientific">Rousettus leschenaultii</name>
    <name type="common">Leschenault's rousette</name>
    <name type="synonym">Pteropus leschenaultii</name>
    <dbReference type="NCBI Taxonomy" id="9408"/>
</organismHost>
<gene>
    <name evidence="1" type="primary">E</name>
    <name type="synonym">sM</name>
    <name type="ORF">4</name>
</gene>
<feature type="chain" id="PRO_0000291371" description="Envelope small membrane protein">
    <location>
        <begin position="1"/>
        <end position="79"/>
    </location>
</feature>
<feature type="topological domain" description="Virion surface" evidence="1">
    <location>
        <begin position="1"/>
        <end position="16"/>
    </location>
</feature>
<feature type="transmembrane region" description="Helical" evidence="1">
    <location>
        <begin position="17"/>
        <end position="37"/>
    </location>
</feature>
<feature type="topological domain" description="Intravirion" evidence="1">
    <location>
        <begin position="38"/>
        <end position="75"/>
    </location>
</feature>
<accession>A3EXG8</accession>
<organism>
    <name type="scientific">Bat coronavirus HKU9</name>
    <name type="common">BtCoV</name>
    <name type="synonym">BtCoV/HKU9</name>
    <dbReference type="NCBI Taxonomy" id="694006"/>
    <lineage>
        <taxon>Viruses</taxon>
        <taxon>Riboviria</taxon>
        <taxon>Orthornavirae</taxon>
        <taxon>Pisuviricota</taxon>
        <taxon>Pisoniviricetes</taxon>
        <taxon>Nidovirales</taxon>
        <taxon>Cornidovirineae</taxon>
        <taxon>Coronaviridae</taxon>
        <taxon>Orthocoronavirinae</taxon>
        <taxon>Betacoronavirus</taxon>
        <taxon>Nobecovirus</taxon>
    </lineage>
</organism>
<proteinExistence type="inferred from homology"/>
<protein>
    <recommendedName>
        <fullName evidence="1">Envelope small membrane protein</fullName>
        <shortName evidence="1">E protein</shortName>
        <shortName evidence="1">sM protein</shortName>
    </recommendedName>
</protein>
<keyword id="KW-0053">Apoptosis</keyword>
<keyword id="KW-1040">Host Golgi apparatus</keyword>
<keyword id="KW-1043">Host membrane</keyword>
<keyword id="KW-0472">Membrane</keyword>
<keyword id="KW-1185">Reference proteome</keyword>
<keyword id="KW-0812">Transmembrane</keyword>
<keyword id="KW-1133">Transmembrane helix</keyword>
<dbReference type="EMBL" id="EF065513">
    <property type="protein sequence ID" value="ABN10913.1"/>
    <property type="molecule type" value="Genomic_RNA"/>
</dbReference>
<dbReference type="RefSeq" id="YP_001039973.1">
    <property type="nucleotide sequence ID" value="NC_009021.1"/>
</dbReference>
<dbReference type="GeneID" id="4836015"/>
<dbReference type="KEGG" id="vg:4836015"/>
<dbReference type="Proteomes" id="UP000006576">
    <property type="component" value="Genome"/>
</dbReference>
<dbReference type="GO" id="GO:0044178">
    <property type="term" value="C:host cell Golgi membrane"/>
    <property type="evidence" value="ECO:0007669"/>
    <property type="project" value="UniProtKB-SubCell"/>
</dbReference>
<dbReference type="GO" id="GO:0016020">
    <property type="term" value="C:membrane"/>
    <property type="evidence" value="ECO:0007669"/>
    <property type="project" value="UniProtKB-UniRule"/>
</dbReference>
<dbReference type="GO" id="GO:0140975">
    <property type="term" value="P:disruption of cellular anatomical structure in another organism"/>
    <property type="evidence" value="ECO:0007669"/>
    <property type="project" value="UniProtKB-UniRule"/>
</dbReference>
<dbReference type="GO" id="GO:0046760">
    <property type="term" value="P:viral budding from Golgi membrane"/>
    <property type="evidence" value="ECO:0007669"/>
    <property type="project" value="UniProtKB-UniRule"/>
</dbReference>
<dbReference type="HAMAP" id="MF_04204">
    <property type="entry name" value="BETA_CORONA_E"/>
    <property type="match status" value="1"/>
</dbReference>
<dbReference type="InterPro" id="IPR043506">
    <property type="entry name" value="E_protein_bCoV"/>
</dbReference>
<dbReference type="InterPro" id="IPR003873">
    <property type="entry name" value="E_protein_CoV"/>
</dbReference>
<dbReference type="PROSITE" id="PS51926">
    <property type="entry name" value="COV_E"/>
    <property type="match status" value="1"/>
</dbReference>
<sequence>MYDIVGTNNSILIANVLVLIIICLLVVIVGCALLLILQFVFGVCGFVFKFVCKPTILVYNKFRNESLLNEREELLCDNV</sequence>
<reference key="1">
    <citation type="journal article" date="2007" name="J. Virol.">
        <title>Comparative analysis of twelve genomes of three novel group 2c and group 2d coronaviruses reveals unique group and subgroup features.</title>
        <authorList>
            <person name="Woo P.C.Y."/>
            <person name="Wang M."/>
            <person name="Lau S.K.P."/>
            <person name="Xu H.F."/>
            <person name="Poon R.W.S."/>
            <person name="Guo R."/>
            <person name="Wong B.H.L."/>
            <person name="Gao K."/>
            <person name="Tsoi H.-W."/>
            <person name="Huang Y."/>
            <person name="Li K.S.M."/>
            <person name="Lam C.S.F."/>
            <person name="Chan K.-H."/>
            <person name="Zheng B.-J."/>
            <person name="Yuen K.-Y."/>
        </authorList>
    </citation>
    <scope>NUCLEOTIDE SEQUENCE [GENOMIC RNA]</scope>
    <source>
        <strain>Isolate HKU9-1</strain>
    </source>
</reference>